<dbReference type="EC" id="2.7.9.2"/>
<dbReference type="EMBL" id="AE000511">
    <property type="protein sequence ID" value="AAD07191.1"/>
    <property type="molecule type" value="Genomic_DNA"/>
</dbReference>
<dbReference type="PIR" id="A64535">
    <property type="entry name" value="A64535"/>
</dbReference>
<dbReference type="RefSeq" id="NP_206921.1">
    <property type="nucleotide sequence ID" value="NC_000915.1"/>
</dbReference>
<dbReference type="RefSeq" id="WP_001269108.1">
    <property type="nucleotide sequence ID" value="NC_018939.1"/>
</dbReference>
<dbReference type="SMR" id="P56070"/>
<dbReference type="DIP" id="DIP-3685N"/>
<dbReference type="FunCoup" id="P56070">
    <property type="interactions" value="167"/>
</dbReference>
<dbReference type="IntAct" id="P56070">
    <property type="interactions" value="2"/>
</dbReference>
<dbReference type="MINT" id="P56070"/>
<dbReference type="STRING" id="85962.HP_0121"/>
<dbReference type="PaxDb" id="85962-C694_00600"/>
<dbReference type="EnsemblBacteria" id="AAD07191">
    <property type="protein sequence ID" value="AAD07191"/>
    <property type="gene ID" value="HP_0121"/>
</dbReference>
<dbReference type="KEGG" id="heo:C694_00600"/>
<dbReference type="KEGG" id="hpy:HP_0121"/>
<dbReference type="PATRIC" id="fig|85962.47.peg.131"/>
<dbReference type="eggNOG" id="COG0574">
    <property type="taxonomic scope" value="Bacteria"/>
</dbReference>
<dbReference type="eggNOG" id="COG1080">
    <property type="taxonomic scope" value="Bacteria"/>
</dbReference>
<dbReference type="InParanoid" id="P56070"/>
<dbReference type="OrthoDB" id="9765468at2"/>
<dbReference type="PhylomeDB" id="P56070"/>
<dbReference type="UniPathway" id="UPA00138"/>
<dbReference type="Proteomes" id="UP000000429">
    <property type="component" value="Chromosome"/>
</dbReference>
<dbReference type="GO" id="GO:0005524">
    <property type="term" value="F:ATP binding"/>
    <property type="evidence" value="ECO:0007669"/>
    <property type="project" value="UniProtKB-KW"/>
</dbReference>
<dbReference type="GO" id="GO:0046872">
    <property type="term" value="F:metal ion binding"/>
    <property type="evidence" value="ECO:0007669"/>
    <property type="project" value="UniProtKB-KW"/>
</dbReference>
<dbReference type="GO" id="GO:0008986">
    <property type="term" value="F:pyruvate, water dikinase activity"/>
    <property type="evidence" value="ECO:0007669"/>
    <property type="project" value="UniProtKB-EC"/>
</dbReference>
<dbReference type="GO" id="GO:0006094">
    <property type="term" value="P:gluconeogenesis"/>
    <property type="evidence" value="ECO:0007669"/>
    <property type="project" value="UniProtKB-UniPathway"/>
</dbReference>
<dbReference type="FunFam" id="3.30.1490.20:FF:000010">
    <property type="entry name" value="Phosphoenolpyruvate synthase"/>
    <property type="match status" value="1"/>
</dbReference>
<dbReference type="FunFam" id="3.30.470.20:FF:000017">
    <property type="entry name" value="Phosphoenolpyruvate synthase"/>
    <property type="match status" value="1"/>
</dbReference>
<dbReference type="FunFam" id="3.50.30.10:FF:000002">
    <property type="entry name" value="Phosphoenolpyruvate synthase"/>
    <property type="match status" value="1"/>
</dbReference>
<dbReference type="Gene3D" id="3.30.1490.20">
    <property type="entry name" value="ATP-grasp fold, A domain"/>
    <property type="match status" value="1"/>
</dbReference>
<dbReference type="Gene3D" id="3.30.470.20">
    <property type="entry name" value="ATP-grasp fold, B domain"/>
    <property type="match status" value="1"/>
</dbReference>
<dbReference type="Gene3D" id="3.20.20.60">
    <property type="entry name" value="Phosphoenolpyruvate-binding domains"/>
    <property type="match status" value="1"/>
</dbReference>
<dbReference type="Gene3D" id="3.50.30.10">
    <property type="entry name" value="Phosphohistidine domain"/>
    <property type="match status" value="1"/>
</dbReference>
<dbReference type="InterPro" id="IPR013815">
    <property type="entry name" value="ATP_grasp_subdomain_1"/>
</dbReference>
<dbReference type="InterPro" id="IPR008279">
    <property type="entry name" value="PEP-util_enz_mobile_dom"/>
</dbReference>
<dbReference type="InterPro" id="IPR006319">
    <property type="entry name" value="PEP_synth"/>
</dbReference>
<dbReference type="InterPro" id="IPR018274">
    <property type="entry name" value="PEP_util_AS"/>
</dbReference>
<dbReference type="InterPro" id="IPR000121">
    <property type="entry name" value="PEP_util_C"/>
</dbReference>
<dbReference type="InterPro" id="IPR023151">
    <property type="entry name" value="PEP_util_CS"/>
</dbReference>
<dbReference type="InterPro" id="IPR036637">
    <property type="entry name" value="Phosphohistidine_dom_sf"/>
</dbReference>
<dbReference type="InterPro" id="IPR002192">
    <property type="entry name" value="PPDK_AMP/ATP-bd"/>
</dbReference>
<dbReference type="InterPro" id="IPR015813">
    <property type="entry name" value="Pyrv/PenolPyrv_kinase-like_dom"/>
</dbReference>
<dbReference type="InterPro" id="IPR040442">
    <property type="entry name" value="Pyrv_kinase-like_dom_sf"/>
</dbReference>
<dbReference type="NCBIfam" id="TIGR01418">
    <property type="entry name" value="PEP_synth"/>
    <property type="match status" value="1"/>
</dbReference>
<dbReference type="NCBIfam" id="NF005057">
    <property type="entry name" value="PRK06464.1"/>
    <property type="match status" value="1"/>
</dbReference>
<dbReference type="PANTHER" id="PTHR43030">
    <property type="entry name" value="PHOSPHOENOLPYRUVATE SYNTHASE"/>
    <property type="match status" value="1"/>
</dbReference>
<dbReference type="PANTHER" id="PTHR43030:SF1">
    <property type="entry name" value="PHOSPHOENOLPYRUVATE SYNTHASE"/>
    <property type="match status" value="1"/>
</dbReference>
<dbReference type="Pfam" id="PF00391">
    <property type="entry name" value="PEP-utilizers"/>
    <property type="match status" value="1"/>
</dbReference>
<dbReference type="Pfam" id="PF02896">
    <property type="entry name" value="PEP-utilizers_C"/>
    <property type="match status" value="1"/>
</dbReference>
<dbReference type="Pfam" id="PF01326">
    <property type="entry name" value="PPDK_N"/>
    <property type="match status" value="1"/>
</dbReference>
<dbReference type="PIRSF" id="PIRSF000854">
    <property type="entry name" value="PEP_synthase"/>
    <property type="match status" value="1"/>
</dbReference>
<dbReference type="PRINTS" id="PR01736">
    <property type="entry name" value="PHPHTRNFRASE"/>
</dbReference>
<dbReference type="SUPFAM" id="SSF56059">
    <property type="entry name" value="Glutathione synthetase ATP-binding domain-like"/>
    <property type="match status" value="1"/>
</dbReference>
<dbReference type="SUPFAM" id="SSF51621">
    <property type="entry name" value="Phosphoenolpyruvate/pyruvate domain"/>
    <property type="match status" value="1"/>
</dbReference>
<dbReference type="SUPFAM" id="SSF52009">
    <property type="entry name" value="Phosphohistidine domain"/>
    <property type="match status" value="1"/>
</dbReference>
<dbReference type="PROSITE" id="PS00742">
    <property type="entry name" value="PEP_ENZYMES_2"/>
    <property type="match status" value="1"/>
</dbReference>
<dbReference type="PROSITE" id="PS00370">
    <property type="entry name" value="PEP_ENZYMES_PHOS_SITE"/>
    <property type="match status" value="1"/>
</dbReference>
<proteinExistence type="inferred from homology"/>
<name>PPSA_HELPY</name>
<comment type="function">
    <text evidence="1">Catalyzes the phosphorylation of pyruvate to phosphoenolpyruvate.</text>
</comment>
<comment type="catalytic activity">
    <reaction>
        <text>pyruvate + ATP + H2O = phosphoenolpyruvate + AMP + phosphate + 2 H(+)</text>
        <dbReference type="Rhea" id="RHEA:11364"/>
        <dbReference type="ChEBI" id="CHEBI:15361"/>
        <dbReference type="ChEBI" id="CHEBI:15377"/>
        <dbReference type="ChEBI" id="CHEBI:15378"/>
        <dbReference type="ChEBI" id="CHEBI:30616"/>
        <dbReference type="ChEBI" id="CHEBI:43474"/>
        <dbReference type="ChEBI" id="CHEBI:58702"/>
        <dbReference type="ChEBI" id="CHEBI:456215"/>
        <dbReference type="EC" id="2.7.9.2"/>
    </reaction>
</comment>
<comment type="cofactor">
    <cofactor evidence="1">
        <name>Mg(2+)</name>
        <dbReference type="ChEBI" id="CHEBI:18420"/>
    </cofactor>
</comment>
<comment type="pathway">
    <text>Carbohydrate biosynthesis; gluconeogenesis.</text>
</comment>
<comment type="domain">
    <text evidence="1">The N-terminal domain contains the ATP/Pi binding site, the central domain the pyrophosphate/phosphate carrier histidine, and the C-terminal domain the pyruvate binding site.</text>
</comment>
<comment type="miscellaneous">
    <text evidence="1">The reaction takes place in three steps, mediated by a phosphocarrier histidine residue located on the surface of the central domain. The two first partial reactions are catalyzed at an active site located on the N-terminal domain, and the third partial reaction is catalyzed at an active site located on the C-terminal domain. For catalytic turnover, the central domain swivels from the concave surface of the N-terminal domain to that of the C-terminal domain (By similarity).</text>
</comment>
<comment type="similarity">
    <text evidence="2">Belongs to the PEP-utilizing enzyme family.</text>
</comment>
<sequence>MRYIKFFKELNNKNVNLVGGKNASIGEMFQELVPIGIKVPDGFAITSEAYWYLLEQGGAKQKIIELLENVDATEIDVLKIRSKQIRELIFGTPFPSDLRDEIFQAYEILSQQYHMKEADVAVRSSATAEDLPDASFAGQQDTYLNIKGKTELIHYIKSCLASLFTDRAISYRASRGFDHLKVALSVGVQKMVRADKGSAGVMFSIDTETGFKDAVFITSAWGLGENVVGGTINPDEFYVFKPTLEQNKRPIIKRQLGNKTQKMVYAPRGSEHPTRNIKTTKKEWQSFSLSDEDVLILAKYAIEIEKHYSKEAKQYRPMDIEWAKDGESGEIFIVQARPETVQSQKSKEESQVFEKFKFKNPNEKKEIILQGRAIGSKIGSGKVRIINDLEHMNSFKEGEILVTDNTDPDWEPCMKKASAVITNRGGRTCHAAIVAREIGVPAIVGVSGATDSLYTGMEITVSCAEGEEGYVYAGIYEHEIERVELSNMQETQTKIYINIGNPEKAFGFSQLPNHGVGLARMEMIILNQIKAHPLALVDLHHKKSVKEKNEIENLMAGYANPKDFFVKKIAEGIGMISAAFYPKPVIVRTSDFKSNEYMRMLGGSSYEPNEENPMLGYRGASRYYSESYNEAFSWECEALALVREEMGLTNMKVMIPFLRTIEEGKKVLEILRKNNLESGKNGLEIYIMCELPVNVILADDFLSLFDGFSIGSNDLTQLTLGVDRDSELVSHVFDERNEAMLKMFKKAIEACKRHNKYCGICGQAPSDYPEVTEFLVKEGITSISLNPDSVIPTWNAVAKLEKELKEHGLTEH</sequence>
<reference key="1">
    <citation type="journal article" date="1997" name="Nature">
        <title>The complete genome sequence of the gastric pathogen Helicobacter pylori.</title>
        <authorList>
            <person name="Tomb J.-F."/>
            <person name="White O."/>
            <person name="Kerlavage A.R."/>
            <person name="Clayton R.A."/>
            <person name="Sutton G.G."/>
            <person name="Fleischmann R.D."/>
            <person name="Ketchum K.A."/>
            <person name="Klenk H.-P."/>
            <person name="Gill S.R."/>
            <person name="Dougherty B.A."/>
            <person name="Nelson K.E."/>
            <person name="Quackenbush J."/>
            <person name="Zhou L."/>
            <person name="Kirkness E.F."/>
            <person name="Peterson S.N."/>
            <person name="Loftus B.J."/>
            <person name="Richardson D.L."/>
            <person name="Dodson R.J."/>
            <person name="Khalak H.G."/>
            <person name="Glodek A."/>
            <person name="McKenney K."/>
            <person name="FitzGerald L.M."/>
            <person name="Lee N."/>
            <person name="Adams M.D."/>
            <person name="Hickey E.K."/>
            <person name="Berg D.E."/>
            <person name="Gocayne J.D."/>
            <person name="Utterback T.R."/>
            <person name="Peterson J.D."/>
            <person name="Kelley J.M."/>
            <person name="Cotton M.D."/>
            <person name="Weidman J.F."/>
            <person name="Fujii C."/>
            <person name="Bowman C."/>
            <person name="Watthey L."/>
            <person name="Wallin E."/>
            <person name="Hayes W.S."/>
            <person name="Borodovsky M."/>
            <person name="Karp P.D."/>
            <person name="Smith H.O."/>
            <person name="Fraser C.M."/>
            <person name="Venter J.C."/>
        </authorList>
    </citation>
    <scope>NUCLEOTIDE SEQUENCE [LARGE SCALE GENOMIC DNA]</scope>
    <source>
        <strain>ATCC 700392 / 26695</strain>
    </source>
</reference>
<evidence type="ECO:0000250" key="1"/>
<evidence type="ECO:0000305" key="2"/>
<keyword id="KW-0067">ATP-binding</keyword>
<keyword id="KW-0418">Kinase</keyword>
<keyword id="KW-0460">Magnesium</keyword>
<keyword id="KW-0479">Metal-binding</keyword>
<keyword id="KW-0547">Nucleotide-binding</keyword>
<keyword id="KW-1185">Reference proteome</keyword>
<keyword id="KW-0808">Transferase</keyword>
<protein>
    <recommendedName>
        <fullName>Phosphoenolpyruvate synthase</fullName>
        <shortName>PEP synthase</shortName>
        <ecNumber>2.7.9.2</ecNumber>
    </recommendedName>
    <alternativeName>
        <fullName>Pyruvate, water dikinase</fullName>
    </alternativeName>
</protein>
<accession>P56070</accession>
<organism>
    <name type="scientific">Helicobacter pylori (strain ATCC 700392 / 26695)</name>
    <name type="common">Campylobacter pylori</name>
    <dbReference type="NCBI Taxonomy" id="85962"/>
    <lineage>
        <taxon>Bacteria</taxon>
        <taxon>Pseudomonadati</taxon>
        <taxon>Campylobacterota</taxon>
        <taxon>Epsilonproteobacteria</taxon>
        <taxon>Campylobacterales</taxon>
        <taxon>Helicobacteraceae</taxon>
        <taxon>Helicobacter</taxon>
    </lineage>
</organism>
<gene>
    <name type="primary">ppsA</name>
    <name type="ordered locus">HP_0121</name>
</gene>
<feature type="chain" id="PRO_0000147036" description="Phosphoenolpyruvate synthase">
    <location>
        <begin position="1"/>
        <end position="812"/>
    </location>
</feature>
<feature type="active site" description="Tele-phosphohistidine intermediate" evidence="1">
    <location>
        <position position="430"/>
    </location>
</feature>
<feature type="active site" description="Proton donor" evidence="1">
    <location>
        <position position="761"/>
    </location>
</feature>
<feature type="binding site" evidence="1">
    <location>
        <position position="520"/>
    </location>
    <ligand>
        <name>substrate</name>
    </ligand>
</feature>
<feature type="binding site" evidence="1">
    <location>
        <position position="588"/>
    </location>
    <ligand>
        <name>substrate</name>
    </ligand>
</feature>
<feature type="binding site" evidence="1">
    <location>
        <position position="690"/>
    </location>
    <ligand>
        <name>Mg(2+)</name>
        <dbReference type="ChEBI" id="CHEBI:18420"/>
    </ligand>
</feature>
<feature type="binding site" evidence="1">
    <location>
        <position position="690"/>
    </location>
    <ligand>
        <name>substrate</name>
    </ligand>
</feature>
<feature type="binding site" evidence="1">
    <location>
        <position position="711"/>
    </location>
    <ligand>
        <name>substrate</name>
    </ligand>
</feature>
<feature type="binding site" evidence="1">
    <location>
        <position position="712"/>
    </location>
    <ligand>
        <name>substrate</name>
    </ligand>
</feature>
<feature type="binding site" evidence="1">
    <location>
        <position position="713"/>
    </location>
    <ligand>
        <name>substrate</name>
    </ligand>
</feature>
<feature type="binding site" evidence="1">
    <location>
        <position position="714"/>
    </location>
    <ligand>
        <name>Mg(2+)</name>
        <dbReference type="ChEBI" id="CHEBI:18420"/>
    </ligand>
</feature>
<feature type="binding site" evidence="1">
    <location>
        <position position="714"/>
    </location>
    <ligand>
        <name>substrate</name>
    </ligand>
</feature>